<keyword id="KW-0028">Amino-acid biosynthesis</keyword>
<keyword id="KW-0057">Aromatic amino acid biosynthesis</keyword>
<keyword id="KW-0963">Cytoplasm</keyword>
<keyword id="KW-1185">Reference proteome</keyword>
<keyword id="KW-0808">Transferase</keyword>
<gene>
    <name evidence="1" type="primary">aroA</name>
    <name type="ordered locus">Asuc_0924</name>
</gene>
<proteinExistence type="inferred from homology"/>
<protein>
    <recommendedName>
        <fullName evidence="1">3-phosphoshikimate 1-carboxyvinyltransferase</fullName>
        <ecNumber evidence="1">2.5.1.19</ecNumber>
    </recommendedName>
    <alternativeName>
        <fullName evidence="1">5-enolpyruvylshikimate-3-phosphate synthase</fullName>
        <shortName evidence="1">EPSP synthase</shortName>
        <shortName evidence="1">EPSPS</shortName>
    </alternativeName>
</protein>
<comment type="function">
    <text evidence="1">Catalyzes the transfer of the enolpyruvyl moiety of phosphoenolpyruvate (PEP) to the 5-hydroxyl of shikimate-3-phosphate (S3P) to produce enolpyruvyl shikimate-3-phosphate and inorganic phosphate.</text>
</comment>
<comment type="catalytic activity">
    <reaction evidence="1">
        <text>3-phosphoshikimate + phosphoenolpyruvate = 5-O-(1-carboxyvinyl)-3-phosphoshikimate + phosphate</text>
        <dbReference type="Rhea" id="RHEA:21256"/>
        <dbReference type="ChEBI" id="CHEBI:43474"/>
        <dbReference type="ChEBI" id="CHEBI:57701"/>
        <dbReference type="ChEBI" id="CHEBI:58702"/>
        <dbReference type="ChEBI" id="CHEBI:145989"/>
        <dbReference type="EC" id="2.5.1.19"/>
    </reaction>
    <physiologicalReaction direction="left-to-right" evidence="1">
        <dbReference type="Rhea" id="RHEA:21257"/>
    </physiologicalReaction>
</comment>
<comment type="pathway">
    <text evidence="1">Metabolic intermediate biosynthesis; chorismate biosynthesis; chorismate from D-erythrose 4-phosphate and phosphoenolpyruvate: step 6/7.</text>
</comment>
<comment type="subunit">
    <text evidence="1">Monomer.</text>
</comment>
<comment type="subcellular location">
    <subcellularLocation>
        <location evidence="1">Cytoplasm</location>
    </subcellularLocation>
</comment>
<comment type="similarity">
    <text evidence="1">Belongs to the EPSP synthase family.</text>
</comment>
<name>AROA_ACTSZ</name>
<feature type="chain" id="PRO_1000071734" description="3-phosphoshikimate 1-carboxyvinyltransferase">
    <location>
        <begin position="1"/>
        <end position="433"/>
    </location>
</feature>
<feature type="active site" description="Proton acceptor" evidence="1">
    <location>
        <position position="319"/>
    </location>
</feature>
<feature type="binding site" evidence="1">
    <location>
        <position position="22"/>
    </location>
    <ligand>
        <name>3-phosphoshikimate</name>
        <dbReference type="ChEBI" id="CHEBI:145989"/>
    </ligand>
</feature>
<feature type="binding site" evidence="1">
    <location>
        <position position="22"/>
    </location>
    <ligand>
        <name>phosphoenolpyruvate</name>
        <dbReference type="ChEBI" id="CHEBI:58702"/>
    </ligand>
</feature>
<feature type="binding site" evidence="1">
    <location>
        <position position="23"/>
    </location>
    <ligand>
        <name>3-phosphoshikimate</name>
        <dbReference type="ChEBI" id="CHEBI:145989"/>
    </ligand>
</feature>
<feature type="binding site" evidence="1">
    <location>
        <position position="27"/>
    </location>
    <ligand>
        <name>3-phosphoshikimate</name>
        <dbReference type="ChEBI" id="CHEBI:145989"/>
    </ligand>
</feature>
<feature type="binding site" evidence="1">
    <location>
        <position position="96"/>
    </location>
    <ligand>
        <name>phosphoenolpyruvate</name>
        <dbReference type="ChEBI" id="CHEBI:58702"/>
    </ligand>
</feature>
<feature type="binding site" evidence="1">
    <location>
        <position position="130"/>
    </location>
    <ligand>
        <name>phosphoenolpyruvate</name>
        <dbReference type="ChEBI" id="CHEBI:58702"/>
    </ligand>
</feature>
<feature type="binding site" evidence="1">
    <location>
        <position position="176"/>
    </location>
    <ligand>
        <name>3-phosphoshikimate</name>
        <dbReference type="ChEBI" id="CHEBI:145989"/>
    </ligand>
</feature>
<feature type="binding site" evidence="1">
    <location>
        <position position="177"/>
    </location>
    <ligand>
        <name>3-phosphoshikimate</name>
        <dbReference type="ChEBI" id="CHEBI:145989"/>
    </ligand>
</feature>
<feature type="binding site" evidence="1">
    <location>
        <position position="178"/>
    </location>
    <ligand>
        <name>3-phosphoshikimate</name>
        <dbReference type="ChEBI" id="CHEBI:145989"/>
    </ligand>
</feature>
<feature type="binding site" evidence="1">
    <location>
        <position position="178"/>
    </location>
    <ligand>
        <name>phosphoenolpyruvate</name>
        <dbReference type="ChEBI" id="CHEBI:58702"/>
    </ligand>
</feature>
<feature type="binding site" evidence="1">
    <location>
        <position position="204"/>
    </location>
    <ligand>
        <name>3-phosphoshikimate</name>
        <dbReference type="ChEBI" id="CHEBI:145989"/>
    </ligand>
</feature>
<feature type="binding site" evidence="1">
    <location>
        <position position="319"/>
    </location>
    <ligand>
        <name>3-phosphoshikimate</name>
        <dbReference type="ChEBI" id="CHEBI:145989"/>
    </ligand>
</feature>
<feature type="binding site" evidence="1">
    <location>
        <position position="342"/>
    </location>
    <ligand>
        <name>3-phosphoshikimate</name>
        <dbReference type="ChEBI" id="CHEBI:145989"/>
    </ligand>
</feature>
<feature type="binding site" evidence="1">
    <location>
        <position position="346"/>
    </location>
    <ligand>
        <name>3-phosphoshikimate</name>
        <dbReference type="ChEBI" id="CHEBI:145989"/>
    </ligand>
</feature>
<feature type="binding site" evidence="1">
    <location>
        <position position="350"/>
    </location>
    <ligand>
        <name>phosphoenolpyruvate</name>
        <dbReference type="ChEBI" id="CHEBI:58702"/>
    </ligand>
</feature>
<feature type="binding site" evidence="1">
    <location>
        <position position="394"/>
    </location>
    <ligand>
        <name>phosphoenolpyruvate</name>
        <dbReference type="ChEBI" id="CHEBI:58702"/>
    </ligand>
</feature>
<feature type="binding site" evidence="1">
    <location>
        <position position="419"/>
    </location>
    <ligand>
        <name>phosphoenolpyruvate</name>
        <dbReference type="ChEBI" id="CHEBI:58702"/>
    </ligand>
</feature>
<organism>
    <name type="scientific">Actinobacillus succinogenes (strain ATCC 55618 / DSM 22257 / CCUG 43843 / 130Z)</name>
    <dbReference type="NCBI Taxonomy" id="339671"/>
    <lineage>
        <taxon>Bacteria</taxon>
        <taxon>Pseudomonadati</taxon>
        <taxon>Pseudomonadota</taxon>
        <taxon>Gammaproteobacteria</taxon>
        <taxon>Pasteurellales</taxon>
        <taxon>Pasteurellaceae</taxon>
        <taxon>Actinobacillus</taxon>
    </lineage>
</organism>
<sequence length="433" mass="47146">MEKITLNPIARVEGTVNLPGSKSLSNRALLLAALAKGTTKVTNLLDSDDVRHMLNALKRLGVSYTLSDDKTVCEVQGLGRAFEWQNGLSLFLGNAGTAMRPLTAALCLANSGNESPAEIVLTGEPRMKERPIKHLVDALLQAGAEIEYLEQDGYPPLAIRNKGLHGGKVKIDGSVSSQFLTALLMAAPMSAADTEIEIIGDLVSKPYIDITLNMMKIFGVEVENRNYQRFTVKGCQQYQSPKTFLVEGDASSASYFLAAGAIKGCVKVTGVGKNSIQGDRLFADVLTAMGAKITWGEDFIRAEQGELSGVDMDMNHIPDAAMTIATAALFAKGETVIRNIYNWRVKETDRLAAMATELRKVGATVEEGEDFIRIQPLPLAEFKHAEIETYNDHRMAMCFALIALSDTPVTILDPKCTAKTFPTFFDEFSRISQ</sequence>
<dbReference type="EC" id="2.5.1.19" evidence="1"/>
<dbReference type="EMBL" id="CP000746">
    <property type="protein sequence ID" value="ABR74292.1"/>
    <property type="molecule type" value="Genomic_DNA"/>
</dbReference>
<dbReference type="RefSeq" id="WP_012072669.1">
    <property type="nucleotide sequence ID" value="NC_009655.1"/>
</dbReference>
<dbReference type="SMR" id="A6VMU5"/>
<dbReference type="STRING" id="339671.Asuc_0924"/>
<dbReference type="KEGG" id="asu:Asuc_0924"/>
<dbReference type="eggNOG" id="COG0128">
    <property type="taxonomic scope" value="Bacteria"/>
</dbReference>
<dbReference type="HOGENOM" id="CLU_024321_0_0_6"/>
<dbReference type="OrthoDB" id="9809920at2"/>
<dbReference type="UniPathway" id="UPA00053">
    <property type="reaction ID" value="UER00089"/>
</dbReference>
<dbReference type="Proteomes" id="UP000001114">
    <property type="component" value="Chromosome"/>
</dbReference>
<dbReference type="GO" id="GO:0005737">
    <property type="term" value="C:cytoplasm"/>
    <property type="evidence" value="ECO:0007669"/>
    <property type="project" value="UniProtKB-SubCell"/>
</dbReference>
<dbReference type="GO" id="GO:0003866">
    <property type="term" value="F:3-phosphoshikimate 1-carboxyvinyltransferase activity"/>
    <property type="evidence" value="ECO:0007669"/>
    <property type="project" value="UniProtKB-UniRule"/>
</dbReference>
<dbReference type="GO" id="GO:0008652">
    <property type="term" value="P:amino acid biosynthetic process"/>
    <property type="evidence" value="ECO:0007669"/>
    <property type="project" value="UniProtKB-KW"/>
</dbReference>
<dbReference type="GO" id="GO:0009073">
    <property type="term" value="P:aromatic amino acid family biosynthetic process"/>
    <property type="evidence" value="ECO:0007669"/>
    <property type="project" value="UniProtKB-KW"/>
</dbReference>
<dbReference type="GO" id="GO:0009423">
    <property type="term" value="P:chorismate biosynthetic process"/>
    <property type="evidence" value="ECO:0007669"/>
    <property type="project" value="UniProtKB-UniRule"/>
</dbReference>
<dbReference type="CDD" id="cd01556">
    <property type="entry name" value="EPSP_synthase"/>
    <property type="match status" value="1"/>
</dbReference>
<dbReference type="FunFam" id="3.65.10.10:FF:000003">
    <property type="entry name" value="3-phosphoshikimate 1-carboxyvinyltransferase"/>
    <property type="match status" value="1"/>
</dbReference>
<dbReference type="FunFam" id="3.65.10.10:FF:000004">
    <property type="entry name" value="3-phosphoshikimate 1-carboxyvinyltransferase"/>
    <property type="match status" value="1"/>
</dbReference>
<dbReference type="Gene3D" id="3.65.10.10">
    <property type="entry name" value="Enolpyruvate transferase domain"/>
    <property type="match status" value="2"/>
</dbReference>
<dbReference type="HAMAP" id="MF_00210">
    <property type="entry name" value="EPSP_synth"/>
    <property type="match status" value="1"/>
</dbReference>
<dbReference type="InterPro" id="IPR001986">
    <property type="entry name" value="Enolpyruvate_Tfrase_dom"/>
</dbReference>
<dbReference type="InterPro" id="IPR036968">
    <property type="entry name" value="Enolpyruvate_Tfrase_sf"/>
</dbReference>
<dbReference type="InterPro" id="IPR006264">
    <property type="entry name" value="EPSP_synthase"/>
</dbReference>
<dbReference type="InterPro" id="IPR023193">
    <property type="entry name" value="EPSP_synthase_CS"/>
</dbReference>
<dbReference type="InterPro" id="IPR013792">
    <property type="entry name" value="RNA3'P_cycl/enolpyr_Trfase_a/b"/>
</dbReference>
<dbReference type="NCBIfam" id="TIGR01356">
    <property type="entry name" value="aroA"/>
    <property type="match status" value="1"/>
</dbReference>
<dbReference type="PANTHER" id="PTHR21090">
    <property type="entry name" value="AROM/DEHYDROQUINATE SYNTHASE"/>
    <property type="match status" value="1"/>
</dbReference>
<dbReference type="PANTHER" id="PTHR21090:SF5">
    <property type="entry name" value="PENTAFUNCTIONAL AROM POLYPEPTIDE"/>
    <property type="match status" value="1"/>
</dbReference>
<dbReference type="Pfam" id="PF00275">
    <property type="entry name" value="EPSP_synthase"/>
    <property type="match status" value="1"/>
</dbReference>
<dbReference type="PIRSF" id="PIRSF000505">
    <property type="entry name" value="EPSPS"/>
    <property type="match status" value="1"/>
</dbReference>
<dbReference type="SUPFAM" id="SSF55205">
    <property type="entry name" value="EPT/RTPC-like"/>
    <property type="match status" value="1"/>
</dbReference>
<dbReference type="PROSITE" id="PS00104">
    <property type="entry name" value="EPSP_SYNTHASE_1"/>
    <property type="match status" value="1"/>
</dbReference>
<dbReference type="PROSITE" id="PS00885">
    <property type="entry name" value="EPSP_SYNTHASE_2"/>
    <property type="match status" value="1"/>
</dbReference>
<evidence type="ECO:0000255" key="1">
    <source>
        <dbReference type="HAMAP-Rule" id="MF_00210"/>
    </source>
</evidence>
<accession>A6VMU5</accession>
<reference key="1">
    <citation type="journal article" date="2010" name="BMC Genomics">
        <title>A genomic perspective on the potential of Actinobacillus succinogenes for industrial succinate production.</title>
        <authorList>
            <person name="McKinlay J.B."/>
            <person name="Laivenieks M."/>
            <person name="Schindler B.D."/>
            <person name="McKinlay A.A."/>
            <person name="Siddaramappa S."/>
            <person name="Challacombe J.F."/>
            <person name="Lowry S.R."/>
            <person name="Clum A."/>
            <person name="Lapidus A.L."/>
            <person name="Burkhart K.B."/>
            <person name="Harkins V."/>
            <person name="Vieille C."/>
        </authorList>
    </citation>
    <scope>NUCLEOTIDE SEQUENCE [LARGE SCALE GENOMIC DNA]</scope>
    <source>
        <strain>ATCC 55618 / DSM 22257 / CCUG 43843 / 130Z</strain>
    </source>
</reference>